<comment type="function">
    <text evidence="1">Plays a role in virus cell tropism, and may be required for efficient virus replication in macrophages.</text>
</comment>
<comment type="induction">
    <text evidence="3">Expressed in the early phase of the viral replicative cycle.</text>
</comment>
<comment type="similarity">
    <text evidence="3">Belongs to the asfivirus MGF 110 family.</text>
</comment>
<accession>P0C9H6</accession>
<organism>
    <name type="scientific">African swine fever virus (isolate Tick/South Africa/Pretoriuskop Pr4/1996)</name>
    <name type="common">ASFV</name>
    <dbReference type="NCBI Taxonomy" id="561443"/>
    <lineage>
        <taxon>Viruses</taxon>
        <taxon>Varidnaviria</taxon>
        <taxon>Bamfordvirae</taxon>
        <taxon>Nucleocytoviricota</taxon>
        <taxon>Pokkesviricetes</taxon>
        <taxon>Asfuvirales</taxon>
        <taxon>Asfarviridae</taxon>
        <taxon>Asfivirus</taxon>
        <taxon>African swine fever virus</taxon>
    </lineage>
</organism>
<proteinExistence type="inferred from homology"/>
<reference key="1">
    <citation type="submission" date="2003-03" db="EMBL/GenBank/DDBJ databases">
        <title>African swine fever virus genomes.</title>
        <authorList>
            <person name="Kutish G.F."/>
            <person name="Rock D.L."/>
        </authorList>
    </citation>
    <scope>NUCLEOTIDE SEQUENCE [LARGE SCALE GENOMIC DNA]</scope>
</reference>
<keyword id="KW-0244">Early protein</keyword>
<keyword id="KW-0325">Glycoprotein</keyword>
<keyword id="KW-0732">Signal</keyword>
<protein>
    <recommendedName>
        <fullName>Protein MGF 110-5L</fullName>
    </recommendedName>
</protein>
<evidence type="ECO:0000250" key="1"/>
<evidence type="ECO:0000255" key="2"/>
<evidence type="ECO:0000305" key="3"/>
<sequence>MLVIFLGILGLLANQVSSQLVGQLHPTENPSENELEYWCTYMECCQFCWDCQNGLCVNKLGNTTILENEYVHPCIVSRWLNKCMYDLGQGIDHVMVCSQPKYWNPYKILKKEWKENNSQNK</sequence>
<dbReference type="EMBL" id="AY261363">
    <property type="status" value="NOT_ANNOTATED_CDS"/>
    <property type="molecule type" value="Genomic_DNA"/>
</dbReference>
<dbReference type="SMR" id="P0C9H6"/>
<dbReference type="Proteomes" id="UP000000859">
    <property type="component" value="Segment"/>
</dbReference>
<dbReference type="InterPro" id="IPR004848">
    <property type="entry name" value="ASFV_fam_110"/>
</dbReference>
<dbReference type="Pfam" id="PF01639">
    <property type="entry name" value="v110"/>
    <property type="match status" value="1"/>
</dbReference>
<gene>
    <name type="ordered locus">Pret-013</name>
</gene>
<organismHost>
    <name type="scientific">Ornithodoros</name>
    <name type="common">relapsing fever ticks</name>
    <dbReference type="NCBI Taxonomy" id="6937"/>
</organismHost>
<organismHost>
    <name type="scientific">Phacochoerus aethiopicus</name>
    <name type="common">Warthog</name>
    <dbReference type="NCBI Taxonomy" id="85517"/>
</organismHost>
<organismHost>
    <name type="scientific">Phacochoerus africanus</name>
    <name type="common">Warthog</name>
    <dbReference type="NCBI Taxonomy" id="41426"/>
</organismHost>
<organismHost>
    <name type="scientific">Potamochoerus larvatus</name>
    <name type="common">Bushpig</name>
    <dbReference type="NCBI Taxonomy" id="273792"/>
</organismHost>
<organismHost>
    <name type="scientific">Sus scrofa</name>
    <name type="common">Pig</name>
    <dbReference type="NCBI Taxonomy" id="9823"/>
</organismHost>
<feature type="signal peptide" evidence="2">
    <location>
        <begin position="1"/>
        <end position="18"/>
    </location>
</feature>
<feature type="chain" id="PRO_0000373198" description="Protein MGF 110-5L">
    <location>
        <begin position="19"/>
        <end position="121"/>
    </location>
</feature>
<feature type="glycosylation site" description="N-linked (GlcNAc...) asparagine; by host" evidence="2">
    <location>
        <position position="62"/>
    </location>
</feature>
<feature type="glycosylation site" description="N-linked (GlcNAc...) asparagine; by host" evidence="2">
    <location>
        <position position="116"/>
    </location>
</feature>
<name>1105L_ASFP4</name>